<geneLocation type="chloroplast"/>
<organism>
    <name type="scientific">Nasturtium officinale</name>
    <name type="common">Watercress</name>
    <name type="synonym">Rorippa nasturtium-aquaticum</name>
    <dbReference type="NCBI Taxonomy" id="65948"/>
    <lineage>
        <taxon>Eukaryota</taxon>
        <taxon>Viridiplantae</taxon>
        <taxon>Streptophyta</taxon>
        <taxon>Embryophyta</taxon>
        <taxon>Tracheophyta</taxon>
        <taxon>Spermatophyta</taxon>
        <taxon>Magnoliopsida</taxon>
        <taxon>eudicotyledons</taxon>
        <taxon>Gunneridae</taxon>
        <taxon>Pentapetalae</taxon>
        <taxon>rosids</taxon>
        <taxon>malvids</taxon>
        <taxon>Brassicales</taxon>
        <taxon>Brassicaceae</taxon>
        <taxon>Cardamineae</taxon>
        <taxon>Nasturtium</taxon>
    </lineage>
</organism>
<evidence type="ECO:0000250" key="1">
    <source>
        <dbReference type="UniProtKB" id="O03042"/>
    </source>
</evidence>
<evidence type="ECO:0000255" key="2">
    <source>
        <dbReference type="HAMAP-Rule" id="MF_01338"/>
    </source>
</evidence>
<feature type="propeptide" id="PRO_0000300003" evidence="2">
    <location>
        <begin position="1"/>
        <end position="2"/>
    </location>
</feature>
<feature type="chain" id="PRO_0000300004" description="Ribulose bisphosphate carboxylase large chain">
    <location>
        <begin position="3"/>
        <end position="479"/>
    </location>
</feature>
<feature type="active site" description="Proton acceptor" evidence="2">
    <location>
        <position position="175"/>
    </location>
</feature>
<feature type="active site" description="Proton acceptor" evidence="2">
    <location>
        <position position="294"/>
    </location>
</feature>
<feature type="binding site" description="in homodimeric partner" evidence="2">
    <location>
        <position position="123"/>
    </location>
    <ligand>
        <name>substrate</name>
    </ligand>
</feature>
<feature type="binding site" evidence="2">
    <location>
        <position position="173"/>
    </location>
    <ligand>
        <name>substrate</name>
    </ligand>
</feature>
<feature type="binding site" evidence="2">
    <location>
        <position position="177"/>
    </location>
    <ligand>
        <name>substrate</name>
    </ligand>
</feature>
<feature type="binding site" description="via carbamate group" evidence="2">
    <location>
        <position position="201"/>
    </location>
    <ligand>
        <name>Mg(2+)</name>
        <dbReference type="ChEBI" id="CHEBI:18420"/>
    </ligand>
</feature>
<feature type="binding site" evidence="2">
    <location>
        <position position="203"/>
    </location>
    <ligand>
        <name>Mg(2+)</name>
        <dbReference type="ChEBI" id="CHEBI:18420"/>
    </ligand>
</feature>
<feature type="binding site" evidence="2">
    <location>
        <position position="204"/>
    </location>
    <ligand>
        <name>Mg(2+)</name>
        <dbReference type="ChEBI" id="CHEBI:18420"/>
    </ligand>
</feature>
<feature type="binding site" evidence="2">
    <location>
        <position position="295"/>
    </location>
    <ligand>
        <name>substrate</name>
    </ligand>
</feature>
<feature type="binding site" evidence="2">
    <location>
        <position position="327"/>
    </location>
    <ligand>
        <name>substrate</name>
    </ligand>
</feature>
<feature type="binding site" evidence="2">
    <location>
        <position position="379"/>
    </location>
    <ligand>
        <name>substrate</name>
    </ligand>
</feature>
<feature type="site" description="Transition state stabilizer" evidence="2">
    <location>
        <position position="334"/>
    </location>
</feature>
<feature type="modified residue" description="N6-carboxylysine" evidence="2">
    <location>
        <position position="201"/>
    </location>
</feature>
<feature type="modified residue" description="Phosphoserine" evidence="1">
    <location>
        <position position="208"/>
    </location>
</feature>
<feature type="modified residue" description="Phosphothreonine" evidence="1">
    <location>
        <position position="330"/>
    </location>
</feature>
<feature type="disulfide bond" description="Interchain; in linked form" evidence="2">
    <location>
        <position position="247"/>
    </location>
</feature>
<protein>
    <recommendedName>
        <fullName evidence="2">Ribulose bisphosphate carboxylase large chain</fullName>
        <shortName evidence="2">RuBisCO large subunit</shortName>
        <ecNumber evidence="2">4.1.1.39</ecNumber>
    </recommendedName>
</protein>
<accession>A4QLU1</accession>
<sequence>MSPQTETKANVGFKAGVKEYKLTYYTPEYETKDTDILAAFRVTPQPGVPPEEAGAAVAAESSTGTWTTVWTDGLTSLDRYKGRCYHIEPVPGEETQFIAYVAYPLDLFEEGSVTNMFTSIVGNVFGFKALAALRLEDLRIPPAYTKTFQGPPHGIQVERDKLNKYGRPLLGCTIKPKLGLSAKNYGRAVYECLRGGLDFTKDDENVNSQPFMRWRDRFLFCAEAIYKSQAETGEIKGHYLNATAGTCEEMIKRAVFARELGVPIVMHDYLTGGFTANTSLAHYCRDNGLLLHIHRAMHAVIDRQKNHGMHFRVLAKALRLSGGDHVHAGTVVGKLEGDRESTLGFVDLLRDDYVEKDRSRGIFFTQDWVSLPGVLPVASGGIHVWHMPALTEIFGDDSVLQFGGGTLGHPWGNAPGAVANRVALEACVQARNEGRDLAIEGNTIIREACKWSPELAAACEVWKEIRFNFPTVDTLDTQE</sequence>
<name>RBL_NASOF</name>
<dbReference type="EC" id="4.1.1.39" evidence="2"/>
<dbReference type="EMBL" id="AP009376">
    <property type="protein sequence ID" value="BAF50646.1"/>
    <property type="molecule type" value="Genomic_DNA"/>
</dbReference>
<dbReference type="RefSeq" id="YP_001123822.1">
    <property type="nucleotide sequence ID" value="NC_009275.1"/>
</dbReference>
<dbReference type="SMR" id="A4QLU1"/>
<dbReference type="GeneID" id="4962179"/>
<dbReference type="GO" id="GO:0009507">
    <property type="term" value="C:chloroplast"/>
    <property type="evidence" value="ECO:0007669"/>
    <property type="project" value="UniProtKB-SubCell"/>
</dbReference>
<dbReference type="GO" id="GO:0000287">
    <property type="term" value="F:magnesium ion binding"/>
    <property type="evidence" value="ECO:0007669"/>
    <property type="project" value="UniProtKB-UniRule"/>
</dbReference>
<dbReference type="GO" id="GO:0004497">
    <property type="term" value="F:monooxygenase activity"/>
    <property type="evidence" value="ECO:0007669"/>
    <property type="project" value="UniProtKB-KW"/>
</dbReference>
<dbReference type="GO" id="GO:0016984">
    <property type="term" value="F:ribulose-bisphosphate carboxylase activity"/>
    <property type="evidence" value="ECO:0007669"/>
    <property type="project" value="UniProtKB-UniRule"/>
</dbReference>
<dbReference type="GO" id="GO:0009853">
    <property type="term" value="P:photorespiration"/>
    <property type="evidence" value="ECO:0007669"/>
    <property type="project" value="UniProtKB-KW"/>
</dbReference>
<dbReference type="GO" id="GO:0019253">
    <property type="term" value="P:reductive pentose-phosphate cycle"/>
    <property type="evidence" value="ECO:0007669"/>
    <property type="project" value="UniProtKB-UniRule"/>
</dbReference>
<dbReference type="CDD" id="cd08212">
    <property type="entry name" value="RuBisCO_large_I"/>
    <property type="match status" value="1"/>
</dbReference>
<dbReference type="FunFam" id="3.20.20.110:FF:000001">
    <property type="entry name" value="Ribulose bisphosphate carboxylase large chain"/>
    <property type="match status" value="1"/>
</dbReference>
<dbReference type="FunFam" id="3.30.70.150:FF:000001">
    <property type="entry name" value="Ribulose bisphosphate carboxylase large chain"/>
    <property type="match status" value="1"/>
</dbReference>
<dbReference type="Gene3D" id="3.20.20.110">
    <property type="entry name" value="Ribulose bisphosphate carboxylase, large subunit, C-terminal domain"/>
    <property type="match status" value="1"/>
</dbReference>
<dbReference type="Gene3D" id="3.30.70.150">
    <property type="entry name" value="RuBisCO large subunit, N-terminal domain"/>
    <property type="match status" value="1"/>
</dbReference>
<dbReference type="HAMAP" id="MF_01338">
    <property type="entry name" value="RuBisCO_L_type1"/>
    <property type="match status" value="1"/>
</dbReference>
<dbReference type="InterPro" id="IPR033966">
    <property type="entry name" value="RuBisCO"/>
</dbReference>
<dbReference type="InterPro" id="IPR020878">
    <property type="entry name" value="RuBisCo_large_chain_AS"/>
</dbReference>
<dbReference type="InterPro" id="IPR000685">
    <property type="entry name" value="RuBisCO_lsu_C"/>
</dbReference>
<dbReference type="InterPro" id="IPR036376">
    <property type="entry name" value="RuBisCO_lsu_C_sf"/>
</dbReference>
<dbReference type="InterPro" id="IPR017443">
    <property type="entry name" value="RuBisCO_lsu_fd_N"/>
</dbReference>
<dbReference type="InterPro" id="IPR036422">
    <property type="entry name" value="RuBisCO_lsu_N_sf"/>
</dbReference>
<dbReference type="InterPro" id="IPR020888">
    <property type="entry name" value="RuBisCO_lsuI"/>
</dbReference>
<dbReference type="NCBIfam" id="NF003252">
    <property type="entry name" value="PRK04208.1"/>
    <property type="match status" value="1"/>
</dbReference>
<dbReference type="PANTHER" id="PTHR42704">
    <property type="entry name" value="RIBULOSE BISPHOSPHATE CARBOXYLASE"/>
    <property type="match status" value="1"/>
</dbReference>
<dbReference type="PANTHER" id="PTHR42704:SF16">
    <property type="entry name" value="RIBULOSE BISPHOSPHATE CARBOXYLASE LARGE CHAIN"/>
    <property type="match status" value="1"/>
</dbReference>
<dbReference type="Pfam" id="PF00016">
    <property type="entry name" value="RuBisCO_large"/>
    <property type="match status" value="1"/>
</dbReference>
<dbReference type="Pfam" id="PF02788">
    <property type="entry name" value="RuBisCO_large_N"/>
    <property type="match status" value="1"/>
</dbReference>
<dbReference type="SFLD" id="SFLDG01052">
    <property type="entry name" value="RuBisCO"/>
    <property type="match status" value="1"/>
</dbReference>
<dbReference type="SFLD" id="SFLDS00014">
    <property type="entry name" value="RuBisCO"/>
    <property type="match status" value="1"/>
</dbReference>
<dbReference type="SFLD" id="SFLDG00301">
    <property type="entry name" value="RuBisCO-like_proteins"/>
    <property type="match status" value="1"/>
</dbReference>
<dbReference type="SUPFAM" id="SSF51649">
    <property type="entry name" value="RuBisCo, C-terminal domain"/>
    <property type="match status" value="1"/>
</dbReference>
<dbReference type="SUPFAM" id="SSF54966">
    <property type="entry name" value="RuBisCO, large subunit, small (N-terminal) domain"/>
    <property type="match status" value="1"/>
</dbReference>
<dbReference type="PROSITE" id="PS00157">
    <property type="entry name" value="RUBISCO_LARGE"/>
    <property type="match status" value="1"/>
</dbReference>
<comment type="function">
    <text evidence="2">RuBisCO catalyzes two reactions: the carboxylation of D-ribulose 1,5-bisphosphate, the primary event in carbon dioxide fixation, as well as the oxidative fragmentation of the pentose substrate in the photorespiration process. Both reactions occur simultaneously and in competition at the same active site.</text>
</comment>
<comment type="catalytic activity">
    <reaction evidence="2">
        <text>2 (2R)-3-phosphoglycerate + 2 H(+) = D-ribulose 1,5-bisphosphate + CO2 + H2O</text>
        <dbReference type="Rhea" id="RHEA:23124"/>
        <dbReference type="ChEBI" id="CHEBI:15377"/>
        <dbReference type="ChEBI" id="CHEBI:15378"/>
        <dbReference type="ChEBI" id="CHEBI:16526"/>
        <dbReference type="ChEBI" id="CHEBI:57870"/>
        <dbReference type="ChEBI" id="CHEBI:58272"/>
        <dbReference type="EC" id="4.1.1.39"/>
    </reaction>
</comment>
<comment type="catalytic activity">
    <reaction evidence="2">
        <text>D-ribulose 1,5-bisphosphate + O2 = 2-phosphoglycolate + (2R)-3-phosphoglycerate + 2 H(+)</text>
        <dbReference type="Rhea" id="RHEA:36631"/>
        <dbReference type="ChEBI" id="CHEBI:15378"/>
        <dbReference type="ChEBI" id="CHEBI:15379"/>
        <dbReference type="ChEBI" id="CHEBI:57870"/>
        <dbReference type="ChEBI" id="CHEBI:58033"/>
        <dbReference type="ChEBI" id="CHEBI:58272"/>
    </reaction>
</comment>
<comment type="cofactor">
    <cofactor evidence="2">
        <name>Mg(2+)</name>
        <dbReference type="ChEBI" id="CHEBI:18420"/>
    </cofactor>
    <text evidence="2">Binds 1 Mg(2+) ion per subunit.</text>
</comment>
<comment type="subunit">
    <text evidence="2">Heterohexadecamer of 8 large chains and 8 small chains; disulfide-linked. The disulfide link is formed within the large subunit homodimers.</text>
</comment>
<comment type="subcellular location">
    <subcellularLocation>
        <location>Plastid</location>
        <location>Chloroplast</location>
    </subcellularLocation>
</comment>
<comment type="PTM">
    <text evidence="2">The disulfide bond which can form in the large chain dimeric partners within the hexadecamer appears to be associated with oxidative stress and protein turnover.</text>
</comment>
<comment type="miscellaneous">
    <text evidence="2">The basic functional RuBisCO is composed of a large chain homodimer in a 'head-to-tail' conformation. In form I RuBisCO this homodimer is arranged in a barrel-like tetramer with the small subunits forming a tetrameric 'cap' on each end of the 'barrel'.</text>
</comment>
<comment type="similarity">
    <text evidence="2">Belongs to the RuBisCO large chain family. Type I subfamily.</text>
</comment>
<proteinExistence type="inferred from homology"/>
<keyword id="KW-0113">Calvin cycle</keyword>
<keyword id="KW-0120">Carbon dioxide fixation</keyword>
<keyword id="KW-0150">Chloroplast</keyword>
<keyword id="KW-1015">Disulfide bond</keyword>
<keyword id="KW-0456">Lyase</keyword>
<keyword id="KW-0460">Magnesium</keyword>
<keyword id="KW-0479">Metal-binding</keyword>
<keyword id="KW-0503">Monooxygenase</keyword>
<keyword id="KW-0560">Oxidoreductase</keyword>
<keyword id="KW-0597">Phosphoprotein</keyword>
<keyword id="KW-0601">Photorespiration</keyword>
<keyword id="KW-0602">Photosynthesis</keyword>
<keyword id="KW-0934">Plastid</keyword>
<gene>
    <name evidence="2" type="primary">rbcL</name>
</gene>
<reference key="1">
    <citation type="submission" date="2007-03" db="EMBL/GenBank/DDBJ databases">
        <title>Sequencing analysis of Nasturtium officinale chloroplast DNA.</title>
        <authorList>
            <person name="Hosouchi T."/>
            <person name="Tsuruoka H."/>
            <person name="Kotani H."/>
        </authorList>
    </citation>
    <scope>NUCLEOTIDE SEQUENCE [LARGE SCALE GENOMIC DNA]</scope>
</reference>